<name>KSL11_ORYSI</name>
<sequence length="816" mass="90385">MMLLSSSYSGGQFPGVSPLGTRPKRSTTVVPLPVVTRATAGGVRNNLEVVGNAGTLQGMDIDELRVIVRKQLQGVELSPSSYDTAWVAMVPVQGSPQSPCFPQCVEWILQNQQEDGSWGHSAGPSGEVNKDILLSTLACVLALNTWNVGQDHIRRGLSFIGRNFSVAIDGQCAAPVGFNITFSGMLHLAIGMGLKFPVMETDIDSIFRLREVEFERDAGGTASARKAFMAYVSEGLGREQDWDHVMAYQRKNGSLFNSPSTTAASAIHSCNDRALDYLVSLTSKLGGPVPAIHPDKVYSQLCMVDTLEKMGISSDFACDIRDILDMTYSCWMQDEEEIMLDMATCAKAFRLLRMHGYDVSSEGMARFAERSSFDDSIHAYLNDTKPLLELYKSSQLHFLEEDLILENISSWSAKLLKQQLSSNKIMKSLMPEVEYALKYPLYSTVDALEHRGNIERFNVNGFQRPKSGYCGSGADKEILALAVDKFHYNQSVYQQELRYLESWVAEFGLDELKFARVIPLQSLLSALVPLFPAELSDARIAFSQNCMLTTMVDDFFDGGGSMEEMVNFVALIDEWDNHGEIGFCSNNVEIMFNAIYNTTKRNCAKAALVQNRCVMDHIAKQWQVMVRAMKTEAEWAASRHIPATMEEYMSVGEPSFALGPIVPLSAYLLGEELPEEAVRSPEYGQLLRHASAVGRLLNDVMTYEKEVLTWTPNSVLLQALAAARGGGESPTPPSPACAEAARGEVRRAIQASWRDLHRLVFRDDDGSSIVPRACRELFWGTAKVANVFYQEVDGYTPKAMRGMANAVILDPLHLQQ</sequence>
<comment type="function">
    <text evidence="3">Catalyzes the conversion of syn-copalyl diphosphate to stemodene.</text>
</comment>
<comment type="catalytic activity">
    <reaction>
        <text>9alpha-copalyl diphosphate = stemod-13(17)-ene + diphosphate</text>
        <dbReference type="Rhea" id="RHEA:25556"/>
        <dbReference type="ChEBI" id="CHEBI:33019"/>
        <dbReference type="ChEBI" id="CHEBI:50068"/>
        <dbReference type="ChEBI" id="CHEBI:58622"/>
        <dbReference type="EC" id="4.2.3.34"/>
    </reaction>
</comment>
<comment type="cofactor">
    <cofactor evidence="1">
        <name>Mg(2+)</name>
        <dbReference type="ChEBI" id="CHEBI:18420"/>
    </cofactor>
    <text evidence="1">Binds 3 Mg(2+) ions per subunit.</text>
</comment>
<comment type="domain">
    <text>The Asp-Asp-Xaa-Xaa-Asp/Glu (DDXXD/E) motif is important for the catalytic activity, presumably through binding to Mg(2+).</text>
</comment>
<comment type="miscellaneous">
    <text>Catalyzes the committed step in the biosynthesis of the stemodane family of diterpenoid secondary metabolites, some of which possess mild antiviral activity. Also produces stemod-12-ene and stemar-13-ene as minor products.</text>
</comment>
<comment type="similarity">
    <text evidence="4">Belongs to the terpene synthase family.</text>
</comment>
<comment type="caution">
    <text evidence="4">According to PubMed:16256063, this sequence exists in both japonica and indica subspecies and was submitted by the authors as a japonica cultivar nipponbare sequence. However, the corresponding sequence cannot be found in the currently available japonica nipponbare genome or japonica expressed sequence tag data, but matches perfectly in indica genome sequence. It is therefore annotated as indica sequence.</text>
</comment>
<comment type="sequence caution" evidence="4">
    <conflict type="erroneous gene model prediction">
        <sequence resource="EMBL-CDS" id="EEC68148"/>
    </conflict>
</comment>
<protein>
    <recommendedName>
        <fullName>Stemod-13(17)-ene synthase</fullName>
        <ecNumber>4.2.3.34</ecNumber>
    </recommendedName>
    <alternativeName>
        <fullName>Ent-kaurene synthase-like 11</fullName>
        <shortName>OsKSL11</shortName>
    </alternativeName>
    <alternativeName>
        <fullName>Stemodene synthase</fullName>
    </alternativeName>
</protein>
<evidence type="ECO:0000250" key="1"/>
<evidence type="ECO:0000256" key="2">
    <source>
        <dbReference type="SAM" id="MobiDB-lite"/>
    </source>
</evidence>
<evidence type="ECO:0000269" key="3">
    <source>
    </source>
</evidence>
<evidence type="ECO:0000305" key="4"/>
<accession>Q1AHB2</accession>
<accession>A2ZE63</accession>
<accession>B8BKG2</accession>
<organism>
    <name type="scientific">Oryza sativa subsp. indica</name>
    <name type="common">Rice</name>
    <dbReference type="NCBI Taxonomy" id="39946"/>
    <lineage>
        <taxon>Eukaryota</taxon>
        <taxon>Viridiplantae</taxon>
        <taxon>Streptophyta</taxon>
        <taxon>Embryophyta</taxon>
        <taxon>Tracheophyta</taxon>
        <taxon>Spermatophyta</taxon>
        <taxon>Magnoliopsida</taxon>
        <taxon>Liliopsida</taxon>
        <taxon>Poales</taxon>
        <taxon>Poaceae</taxon>
        <taxon>BOP clade</taxon>
        <taxon>Oryzoideae</taxon>
        <taxon>Oryzeae</taxon>
        <taxon>Oryzinae</taxon>
        <taxon>Oryza</taxon>
        <taxon>Oryza sativa</taxon>
    </lineage>
</organism>
<dbReference type="EC" id="4.2.3.34"/>
<dbReference type="EMBL" id="DQ100373">
    <property type="protein sequence ID" value="AAZ76733.1"/>
    <property type="molecule type" value="mRNA"/>
</dbReference>
<dbReference type="EMBL" id="CM000136">
    <property type="protein sequence ID" value="EEC68148.1"/>
    <property type="status" value="ALT_SEQ"/>
    <property type="molecule type" value="Genomic_DNA"/>
</dbReference>
<dbReference type="SMR" id="Q1AHB2"/>
<dbReference type="STRING" id="39946.Q1AHB2"/>
<dbReference type="EnsemblPlants" id="OsIR64_11g0013740.01">
    <property type="protein sequence ID" value="OsIR64_11g0013740.01"/>
    <property type="gene ID" value="OsIR64_11g0013740"/>
</dbReference>
<dbReference type="EnsemblPlants" id="OsLaMu_11g0013730.01">
    <property type="protein sequence ID" value="OsLaMu_11g0013730.01"/>
    <property type="gene ID" value="OsLaMu_11g0013730"/>
</dbReference>
<dbReference type="EnsemblPlants" id="OsLima_Ung0001990.01">
    <property type="protein sequence ID" value="OsLima_Ung0001990.01"/>
    <property type="gene ID" value="OsLima_Ung0001990"/>
</dbReference>
<dbReference type="EnsemblPlants" id="OsMH63_11G014160_01">
    <property type="protein sequence ID" value="OsMH63_11G014160_01"/>
    <property type="gene ID" value="OsMH63_11G014160"/>
</dbReference>
<dbReference type="EnsemblPlants" id="OsPr106_11g0013770.01">
    <property type="protein sequence ID" value="OsPr106_11g0013770.01"/>
    <property type="gene ID" value="OsPr106_11g0013770"/>
</dbReference>
<dbReference type="EnsemblPlants" id="OsZS97_11G013740_01">
    <property type="protein sequence ID" value="OsZS97_11G013740_01"/>
    <property type="gene ID" value="OsZS97_11G013740"/>
</dbReference>
<dbReference type="Gramene" id="OsIR64_11g0013740.01">
    <property type="protein sequence ID" value="OsIR64_11g0013740.01"/>
    <property type="gene ID" value="OsIR64_11g0013740"/>
</dbReference>
<dbReference type="Gramene" id="OsLaMu_11g0013730.01">
    <property type="protein sequence ID" value="OsLaMu_11g0013730.01"/>
    <property type="gene ID" value="OsLaMu_11g0013730"/>
</dbReference>
<dbReference type="Gramene" id="OsLima_Ung0001990.01">
    <property type="protein sequence ID" value="OsLima_Ung0001990.01"/>
    <property type="gene ID" value="OsLima_Ung0001990"/>
</dbReference>
<dbReference type="Gramene" id="OsMH63_11G014160_01">
    <property type="protein sequence ID" value="OsMH63_11G014160_01"/>
    <property type="gene ID" value="OsMH63_11G014160"/>
</dbReference>
<dbReference type="Gramene" id="OsPr106_11g0013770.01">
    <property type="protein sequence ID" value="OsPr106_11g0013770.01"/>
    <property type="gene ID" value="OsPr106_11g0013770"/>
</dbReference>
<dbReference type="Gramene" id="OsZS97_11G013740_01">
    <property type="protein sequence ID" value="OsZS97_11G013740_01"/>
    <property type="gene ID" value="OsZS97_11G013740"/>
</dbReference>
<dbReference type="KEGG" id="ag:AAZ76733"/>
<dbReference type="HOGENOM" id="CLU_003125_2_0_1"/>
<dbReference type="BioCyc" id="MetaCyc:MONOMER-13868"/>
<dbReference type="BRENDA" id="4.2.3.34">
    <property type="organism ID" value="4460"/>
</dbReference>
<dbReference type="BRENDA" id="4.2.3.B25">
    <property type="organism ID" value="4460"/>
</dbReference>
<dbReference type="Proteomes" id="UP000007015">
    <property type="component" value="Chromosome 11"/>
</dbReference>
<dbReference type="GO" id="GO:0000287">
    <property type="term" value="F:magnesium ion binding"/>
    <property type="evidence" value="ECO:0007669"/>
    <property type="project" value="InterPro"/>
</dbReference>
<dbReference type="GO" id="GO:0034283">
    <property type="term" value="F:syn-stemod-13(17)-ene synthase activity"/>
    <property type="evidence" value="ECO:0007669"/>
    <property type="project" value="UniProtKB-EC"/>
</dbReference>
<dbReference type="GO" id="GO:0010333">
    <property type="term" value="F:terpene synthase activity"/>
    <property type="evidence" value="ECO:0007669"/>
    <property type="project" value="InterPro"/>
</dbReference>
<dbReference type="GO" id="GO:0006952">
    <property type="term" value="P:defense response"/>
    <property type="evidence" value="ECO:0007669"/>
    <property type="project" value="UniProtKB-KW"/>
</dbReference>
<dbReference type="GO" id="GO:0016102">
    <property type="term" value="P:diterpenoid biosynthetic process"/>
    <property type="evidence" value="ECO:0007669"/>
    <property type="project" value="TreeGrafter"/>
</dbReference>
<dbReference type="FunFam" id="1.50.10.160:FF:000002">
    <property type="entry name" value="cis-abienol synthase, chloroplastic"/>
    <property type="match status" value="1"/>
</dbReference>
<dbReference type="FunFam" id="1.50.10.130:FF:000003">
    <property type="entry name" value="Ent-cassa-12,15-diene synthase"/>
    <property type="match status" value="1"/>
</dbReference>
<dbReference type="FunFam" id="1.10.600.10:FF:000005">
    <property type="entry name" value="Ent-kaur-16-ene synthase, chloroplastic"/>
    <property type="match status" value="1"/>
</dbReference>
<dbReference type="Gene3D" id="1.50.10.160">
    <property type="match status" value="1"/>
</dbReference>
<dbReference type="Gene3D" id="1.10.600.10">
    <property type="entry name" value="Farnesyl Diphosphate Synthase"/>
    <property type="match status" value="1"/>
</dbReference>
<dbReference type="Gene3D" id="1.50.10.130">
    <property type="entry name" value="Terpene synthase, N-terminal domain"/>
    <property type="match status" value="1"/>
</dbReference>
<dbReference type="InterPro" id="IPR008949">
    <property type="entry name" value="Isoprenoid_synthase_dom_sf"/>
</dbReference>
<dbReference type="InterPro" id="IPR001906">
    <property type="entry name" value="Terpene_synth_N"/>
</dbReference>
<dbReference type="InterPro" id="IPR036965">
    <property type="entry name" value="Terpene_synth_N_sf"/>
</dbReference>
<dbReference type="InterPro" id="IPR050148">
    <property type="entry name" value="Terpene_synthase-like"/>
</dbReference>
<dbReference type="InterPro" id="IPR005630">
    <property type="entry name" value="Terpene_synthase_metal-bd"/>
</dbReference>
<dbReference type="InterPro" id="IPR008930">
    <property type="entry name" value="Terpenoid_cyclase/PrenylTrfase"/>
</dbReference>
<dbReference type="PANTHER" id="PTHR31739">
    <property type="entry name" value="ENT-COPALYL DIPHOSPHATE SYNTHASE, CHLOROPLASTIC"/>
    <property type="match status" value="1"/>
</dbReference>
<dbReference type="PANTHER" id="PTHR31739:SF17">
    <property type="entry name" value="ENT-SANDARACOPIMARA-8(14),15-DIENE SYNTHASE, CHLOROPLASTIC"/>
    <property type="match status" value="1"/>
</dbReference>
<dbReference type="Pfam" id="PF01397">
    <property type="entry name" value="Terpene_synth"/>
    <property type="match status" value="1"/>
</dbReference>
<dbReference type="Pfam" id="PF03936">
    <property type="entry name" value="Terpene_synth_C"/>
    <property type="match status" value="1"/>
</dbReference>
<dbReference type="SFLD" id="SFLDG01014">
    <property type="entry name" value="Terpene_Cyclase_Like_1_N-term"/>
    <property type="match status" value="1"/>
</dbReference>
<dbReference type="SUPFAM" id="SSF48239">
    <property type="entry name" value="Terpenoid cyclases/Protein prenyltransferases"/>
    <property type="match status" value="2"/>
</dbReference>
<dbReference type="SUPFAM" id="SSF48576">
    <property type="entry name" value="Terpenoid synthases"/>
    <property type="match status" value="1"/>
</dbReference>
<proteinExistence type="evidence at transcript level"/>
<feature type="chain" id="PRO_0000372324" description="Stemod-13(17)-ene synthase">
    <location>
        <begin position="1"/>
        <end position="816"/>
    </location>
</feature>
<feature type="region of interest" description="Disordered" evidence="2">
    <location>
        <begin position="1"/>
        <end position="24"/>
    </location>
</feature>
<feature type="short sequence motif" description="DDXXD motif">
    <location>
        <begin position="553"/>
        <end position="557"/>
    </location>
</feature>
<feature type="compositionally biased region" description="Polar residues" evidence="2">
    <location>
        <begin position="1"/>
        <end position="10"/>
    </location>
</feature>
<feature type="binding site" evidence="1">
    <location>
        <position position="553"/>
    </location>
    <ligand>
        <name>Mg(2+)</name>
        <dbReference type="ChEBI" id="CHEBI:18420"/>
        <label>1</label>
    </ligand>
</feature>
<feature type="binding site" evidence="1">
    <location>
        <position position="553"/>
    </location>
    <ligand>
        <name>Mg(2+)</name>
        <dbReference type="ChEBI" id="CHEBI:18420"/>
        <label>2</label>
    </ligand>
</feature>
<feature type="binding site" evidence="1">
    <location>
        <position position="557"/>
    </location>
    <ligand>
        <name>Mg(2+)</name>
        <dbReference type="ChEBI" id="CHEBI:18420"/>
        <label>1</label>
    </ligand>
</feature>
<feature type="binding site" evidence="1">
    <location>
        <position position="557"/>
    </location>
    <ligand>
        <name>Mg(2+)</name>
        <dbReference type="ChEBI" id="CHEBI:18420"/>
        <label>2</label>
    </ligand>
</feature>
<feature type="binding site" evidence="1">
    <location>
        <position position="698"/>
    </location>
    <ligand>
        <name>Mg(2+)</name>
        <dbReference type="ChEBI" id="CHEBI:18420"/>
        <label>3</label>
    </ligand>
</feature>
<feature type="binding site" evidence="1">
    <location>
        <position position="702"/>
    </location>
    <ligand>
        <name>Mg(2+)</name>
        <dbReference type="ChEBI" id="CHEBI:18420"/>
        <label>3</label>
    </ligand>
</feature>
<feature type="binding site" evidence="1">
    <location>
        <position position="706"/>
    </location>
    <ligand>
        <name>Mg(2+)</name>
        <dbReference type="ChEBI" id="CHEBI:18420"/>
        <label>3</label>
    </ligand>
</feature>
<gene>
    <name type="primary">KSL11</name>
    <name type="synonym">KS11</name>
    <name type="ORF">OsI_034856</name>
    <name type="ORF">OsI_36076</name>
</gene>
<keyword id="KW-0456">Lyase</keyword>
<keyword id="KW-0460">Magnesium</keyword>
<keyword id="KW-0479">Metal-binding</keyword>
<keyword id="KW-0611">Plant defense</keyword>
<keyword id="KW-1185">Reference proteome</keyword>
<reference key="1">
    <citation type="journal article" date="2006" name="Arch. Biochem. Biophys.">
        <title>An unexpected diterpene cyclase from rice: functional identification of a stemodene synthase.</title>
        <authorList>
            <person name="Morrone D."/>
            <person name="Jin Y."/>
            <person name="Xu M."/>
            <person name="Choi S.-Y."/>
            <person name="Coates R.M."/>
            <person name="Peters R.J."/>
        </authorList>
    </citation>
    <scope>NUCLEOTIDE SEQUENCE [MRNA]</scope>
    <scope>FUNCTION</scope>
</reference>
<reference key="2">
    <citation type="journal article" date="2005" name="PLoS Biol.">
        <title>The genomes of Oryza sativa: a history of duplications.</title>
        <authorList>
            <person name="Yu J."/>
            <person name="Wang J."/>
            <person name="Lin W."/>
            <person name="Li S."/>
            <person name="Li H."/>
            <person name="Zhou J."/>
            <person name="Ni P."/>
            <person name="Dong W."/>
            <person name="Hu S."/>
            <person name="Zeng C."/>
            <person name="Zhang J."/>
            <person name="Zhang Y."/>
            <person name="Li R."/>
            <person name="Xu Z."/>
            <person name="Li S."/>
            <person name="Li X."/>
            <person name="Zheng H."/>
            <person name="Cong L."/>
            <person name="Lin L."/>
            <person name="Yin J."/>
            <person name="Geng J."/>
            <person name="Li G."/>
            <person name="Shi J."/>
            <person name="Liu J."/>
            <person name="Lv H."/>
            <person name="Li J."/>
            <person name="Wang J."/>
            <person name="Deng Y."/>
            <person name="Ran L."/>
            <person name="Shi X."/>
            <person name="Wang X."/>
            <person name="Wu Q."/>
            <person name="Li C."/>
            <person name="Ren X."/>
            <person name="Wang J."/>
            <person name="Wang X."/>
            <person name="Li D."/>
            <person name="Liu D."/>
            <person name="Zhang X."/>
            <person name="Ji Z."/>
            <person name="Zhao W."/>
            <person name="Sun Y."/>
            <person name="Zhang Z."/>
            <person name="Bao J."/>
            <person name="Han Y."/>
            <person name="Dong L."/>
            <person name="Ji J."/>
            <person name="Chen P."/>
            <person name="Wu S."/>
            <person name="Liu J."/>
            <person name="Xiao Y."/>
            <person name="Bu D."/>
            <person name="Tan J."/>
            <person name="Yang L."/>
            <person name="Ye C."/>
            <person name="Zhang J."/>
            <person name="Xu J."/>
            <person name="Zhou Y."/>
            <person name="Yu Y."/>
            <person name="Zhang B."/>
            <person name="Zhuang S."/>
            <person name="Wei H."/>
            <person name="Liu B."/>
            <person name="Lei M."/>
            <person name="Yu H."/>
            <person name="Li Y."/>
            <person name="Xu H."/>
            <person name="Wei S."/>
            <person name="He X."/>
            <person name="Fang L."/>
            <person name="Zhang Z."/>
            <person name="Zhang Y."/>
            <person name="Huang X."/>
            <person name="Su Z."/>
            <person name="Tong W."/>
            <person name="Li J."/>
            <person name="Tong Z."/>
            <person name="Li S."/>
            <person name="Ye J."/>
            <person name="Wang L."/>
            <person name="Fang L."/>
            <person name="Lei T."/>
            <person name="Chen C.-S."/>
            <person name="Chen H.-C."/>
            <person name="Xu Z."/>
            <person name="Li H."/>
            <person name="Huang H."/>
            <person name="Zhang F."/>
            <person name="Xu H."/>
            <person name="Li N."/>
            <person name="Zhao C."/>
            <person name="Li S."/>
            <person name="Dong L."/>
            <person name="Huang Y."/>
            <person name="Li L."/>
            <person name="Xi Y."/>
            <person name="Qi Q."/>
            <person name="Li W."/>
            <person name="Zhang B."/>
            <person name="Hu W."/>
            <person name="Zhang Y."/>
            <person name="Tian X."/>
            <person name="Jiao Y."/>
            <person name="Liang X."/>
            <person name="Jin J."/>
            <person name="Gao L."/>
            <person name="Zheng W."/>
            <person name="Hao B."/>
            <person name="Liu S.-M."/>
            <person name="Wang W."/>
            <person name="Yuan L."/>
            <person name="Cao M."/>
            <person name="McDermott J."/>
            <person name="Samudrala R."/>
            <person name="Wang J."/>
            <person name="Wong G.K.-S."/>
            <person name="Yang H."/>
        </authorList>
    </citation>
    <scope>NUCLEOTIDE SEQUENCE [LARGE SCALE GENOMIC DNA]</scope>
    <source>
        <strain>cv. 93-11</strain>
    </source>
</reference>